<comment type="function">
    <text evidence="1">Catalyzes the reversible interconversion of serine and glycine with tetrahydrofolate (THF) serving as the one-carbon carrier. This reaction serves as the major source of one-carbon groups required for the biosynthesis of purines, thymidylate, methionine, and other important biomolecules. Also exhibits THF-independent aldolase activity toward beta-hydroxyamino acids, producing glycine and aldehydes, via a retro-aldol mechanism.</text>
</comment>
<comment type="catalytic activity">
    <reaction evidence="1">
        <text>(6R)-5,10-methylene-5,6,7,8-tetrahydrofolate + glycine + H2O = (6S)-5,6,7,8-tetrahydrofolate + L-serine</text>
        <dbReference type="Rhea" id="RHEA:15481"/>
        <dbReference type="ChEBI" id="CHEBI:15377"/>
        <dbReference type="ChEBI" id="CHEBI:15636"/>
        <dbReference type="ChEBI" id="CHEBI:33384"/>
        <dbReference type="ChEBI" id="CHEBI:57305"/>
        <dbReference type="ChEBI" id="CHEBI:57453"/>
        <dbReference type="EC" id="2.1.2.1"/>
    </reaction>
</comment>
<comment type="cofactor">
    <cofactor evidence="1">
        <name>pyridoxal 5'-phosphate</name>
        <dbReference type="ChEBI" id="CHEBI:597326"/>
    </cofactor>
</comment>
<comment type="pathway">
    <text evidence="1">One-carbon metabolism; tetrahydrofolate interconversion.</text>
</comment>
<comment type="pathway">
    <text evidence="1">Amino-acid biosynthesis; glycine biosynthesis; glycine from L-serine: step 1/1.</text>
</comment>
<comment type="subunit">
    <text evidence="1">Homodimer.</text>
</comment>
<comment type="subcellular location">
    <subcellularLocation>
        <location evidence="1">Cytoplasm</location>
    </subcellularLocation>
</comment>
<comment type="similarity">
    <text evidence="1">Belongs to the SHMT family.</text>
</comment>
<proteinExistence type="inferred from homology"/>
<feature type="chain" id="PRO_1000091542" description="Serine hydroxymethyltransferase">
    <location>
        <begin position="1"/>
        <end position="417"/>
    </location>
</feature>
<feature type="binding site" evidence="1">
    <location>
        <position position="122"/>
    </location>
    <ligand>
        <name>(6S)-5,6,7,8-tetrahydrofolate</name>
        <dbReference type="ChEBI" id="CHEBI:57453"/>
    </ligand>
</feature>
<feature type="binding site" evidence="1">
    <location>
        <begin position="126"/>
        <end position="128"/>
    </location>
    <ligand>
        <name>(6S)-5,6,7,8-tetrahydrofolate</name>
        <dbReference type="ChEBI" id="CHEBI:57453"/>
    </ligand>
</feature>
<feature type="binding site" evidence="1">
    <location>
        <begin position="355"/>
        <end position="357"/>
    </location>
    <ligand>
        <name>(6S)-5,6,7,8-tetrahydrofolate</name>
        <dbReference type="ChEBI" id="CHEBI:57453"/>
    </ligand>
</feature>
<feature type="site" description="Plays an important role in substrate specificity" evidence="1">
    <location>
        <position position="229"/>
    </location>
</feature>
<feature type="modified residue" description="N6-(pyridoxal phosphate)lysine" evidence="1">
    <location>
        <position position="230"/>
    </location>
</feature>
<name>GLYA_FRATM</name>
<organism>
    <name type="scientific">Francisella tularensis subsp. mediasiatica (strain FSC147)</name>
    <dbReference type="NCBI Taxonomy" id="441952"/>
    <lineage>
        <taxon>Bacteria</taxon>
        <taxon>Pseudomonadati</taxon>
        <taxon>Pseudomonadota</taxon>
        <taxon>Gammaproteobacteria</taxon>
        <taxon>Thiotrichales</taxon>
        <taxon>Francisellaceae</taxon>
        <taxon>Francisella</taxon>
    </lineage>
</organism>
<keyword id="KW-0028">Amino-acid biosynthesis</keyword>
<keyword id="KW-0963">Cytoplasm</keyword>
<keyword id="KW-0554">One-carbon metabolism</keyword>
<keyword id="KW-0663">Pyridoxal phosphate</keyword>
<keyword id="KW-0808">Transferase</keyword>
<accession>B2SGE5</accession>
<protein>
    <recommendedName>
        <fullName evidence="1">Serine hydroxymethyltransferase</fullName>
        <shortName evidence="1">SHMT</shortName>
        <shortName evidence="1">Serine methylase</shortName>
        <ecNumber evidence="1">2.1.2.1</ecNumber>
    </recommendedName>
</protein>
<evidence type="ECO:0000255" key="1">
    <source>
        <dbReference type="HAMAP-Rule" id="MF_00051"/>
    </source>
</evidence>
<reference key="1">
    <citation type="journal article" date="2009" name="PLoS Pathog.">
        <title>Molecular evolutionary consequences of niche restriction in Francisella tularensis, a facultative intracellular pathogen.</title>
        <authorList>
            <person name="Larsson P."/>
            <person name="Elfsmark D."/>
            <person name="Svensson K."/>
            <person name="Wikstroem P."/>
            <person name="Forsman M."/>
            <person name="Brettin T."/>
            <person name="Keim P."/>
            <person name="Johansson A."/>
        </authorList>
    </citation>
    <scope>NUCLEOTIDE SEQUENCE [LARGE SCALE GENOMIC DNA]</scope>
    <source>
        <strain>FSC147</strain>
    </source>
</reference>
<dbReference type="EC" id="2.1.2.1" evidence="1"/>
<dbReference type="EMBL" id="CP000915">
    <property type="protein sequence ID" value="ACD30804.1"/>
    <property type="molecule type" value="Genomic_DNA"/>
</dbReference>
<dbReference type="SMR" id="B2SGE5"/>
<dbReference type="KEGG" id="ftm:FTM_0860"/>
<dbReference type="HOGENOM" id="CLU_022477_2_1_6"/>
<dbReference type="UniPathway" id="UPA00193"/>
<dbReference type="UniPathway" id="UPA00288">
    <property type="reaction ID" value="UER01023"/>
</dbReference>
<dbReference type="GO" id="GO:0005829">
    <property type="term" value="C:cytosol"/>
    <property type="evidence" value="ECO:0007669"/>
    <property type="project" value="TreeGrafter"/>
</dbReference>
<dbReference type="GO" id="GO:0004372">
    <property type="term" value="F:glycine hydroxymethyltransferase activity"/>
    <property type="evidence" value="ECO:0007669"/>
    <property type="project" value="UniProtKB-UniRule"/>
</dbReference>
<dbReference type="GO" id="GO:0030170">
    <property type="term" value="F:pyridoxal phosphate binding"/>
    <property type="evidence" value="ECO:0007669"/>
    <property type="project" value="UniProtKB-UniRule"/>
</dbReference>
<dbReference type="GO" id="GO:0019264">
    <property type="term" value="P:glycine biosynthetic process from serine"/>
    <property type="evidence" value="ECO:0007669"/>
    <property type="project" value="UniProtKB-UniRule"/>
</dbReference>
<dbReference type="GO" id="GO:0035999">
    <property type="term" value="P:tetrahydrofolate interconversion"/>
    <property type="evidence" value="ECO:0007669"/>
    <property type="project" value="UniProtKB-UniRule"/>
</dbReference>
<dbReference type="CDD" id="cd00378">
    <property type="entry name" value="SHMT"/>
    <property type="match status" value="1"/>
</dbReference>
<dbReference type="FunFam" id="3.40.640.10:FF:000001">
    <property type="entry name" value="Serine hydroxymethyltransferase"/>
    <property type="match status" value="1"/>
</dbReference>
<dbReference type="FunFam" id="3.90.1150.10:FF:000003">
    <property type="entry name" value="Serine hydroxymethyltransferase"/>
    <property type="match status" value="1"/>
</dbReference>
<dbReference type="Gene3D" id="3.90.1150.10">
    <property type="entry name" value="Aspartate Aminotransferase, domain 1"/>
    <property type="match status" value="1"/>
</dbReference>
<dbReference type="Gene3D" id="3.40.640.10">
    <property type="entry name" value="Type I PLP-dependent aspartate aminotransferase-like (Major domain)"/>
    <property type="match status" value="1"/>
</dbReference>
<dbReference type="HAMAP" id="MF_00051">
    <property type="entry name" value="SHMT"/>
    <property type="match status" value="1"/>
</dbReference>
<dbReference type="InterPro" id="IPR015424">
    <property type="entry name" value="PyrdxlP-dep_Trfase"/>
</dbReference>
<dbReference type="InterPro" id="IPR015421">
    <property type="entry name" value="PyrdxlP-dep_Trfase_major"/>
</dbReference>
<dbReference type="InterPro" id="IPR015422">
    <property type="entry name" value="PyrdxlP-dep_Trfase_small"/>
</dbReference>
<dbReference type="InterPro" id="IPR001085">
    <property type="entry name" value="Ser_HO-MeTrfase"/>
</dbReference>
<dbReference type="InterPro" id="IPR049943">
    <property type="entry name" value="Ser_HO-MeTrfase-like"/>
</dbReference>
<dbReference type="InterPro" id="IPR019798">
    <property type="entry name" value="Ser_HO-MeTrfase_PLP_BS"/>
</dbReference>
<dbReference type="InterPro" id="IPR039429">
    <property type="entry name" value="SHMT-like_dom"/>
</dbReference>
<dbReference type="NCBIfam" id="NF000586">
    <property type="entry name" value="PRK00011.1"/>
    <property type="match status" value="1"/>
</dbReference>
<dbReference type="PANTHER" id="PTHR11680">
    <property type="entry name" value="SERINE HYDROXYMETHYLTRANSFERASE"/>
    <property type="match status" value="1"/>
</dbReference>
<dbReference type="PANTHER" id="PTHR11680:SF50">
    <property type="entry name" value="SERINE HYDROXYMETHYLTRANSFERASE"/>
    <property type="match status" value="1"/>
</dbReference>
<dbReference type="Pfam" id="PF00464">
    <property type="entry name" value="SHMT"/>
    <property type="match status" value="1"/>
</dbReference>
<dbReference type="PIRSF" id="PIRSF000412">
    <property type="entry name" value="SHMT"/>
    <property type="match status" value="1"/>
</dbReference>
<dbReference type="SUPFAM" id="SSF53383">
    <property type="entry name" value="PLP-dependent transferases"/>
    <property type="match status" value="1"/>
</dbReference>
<dbReference type="PROSITE" id="PS00096">
    <property type="entry name" value="SHMT"/>
    <property type="match status" value="1"/>
</dbReference>
<gene>
    <name evidence="1" type="primary">glyA</name>
    <name type="ordered locus">FTM_0860</name>
</gene>
<sequence>MFSFEKNSLKNTDKEIFDAIELEVKRQHEHVELIASENYASPAVMEAQGSQLTNKYAEGYHGKRYYGGCEFVDIAEKLAIERAQQLFGVDYANVQPHSGSQANAAVYNAVLKPGDTVLGMDLGAGGHLTHGSKVNFSGKIYNSIQYGLDENGDIDYEQVAQLAKEHKPKMIIAGFSAFSGIINWQKFREIADSVDAVLMADIAHVAGLVAAGVYPNPFPYVYVATTTTHKTLRGPRGGLILCNNNPELAKKFQSAIFPGIQGGPLMHVIAAKAVAFKEALEPSFVDYQKQVLKNAKAMEKVLKQRGINIISGGTSNHLLLLDITNTGFSGKEAEAALGRANITVNKNSIPNDPRSPFVTSGLRIGSPAITTRGFKEKECELVANLLADVVFNCGDEKVENETAAKVLDLCDKFPVYK</sequence>